<evidence type="ECO:0000250" key="1">
    <source>
        <dbReference type="UniProtKB" id="P9WHW9"/>
    </source>
</evidence>
<evidence type="ECO:0000256" key="2">
    <source>
        <dbReference type="SAM" id="MobiDB-lite"/>
    </source>
</evidence>
<evidence type="ECO:0000305" key="3"/>
<sequence length="368" mass="37330">MLWHAMPPELNTARLMAGAGPAPMLAAAAGWQTLSAALDAQAVELTARLNSLGEAWTGGGSDKALAAATPMVVWLQTASTQAKTRAMQATAQAAAYTQAMATTPSLPEIAANHITQAVLTATNFFGINTIPIALTEMDYFIRMWNQAALAMEVYQAETAVNTLFEKLEPMASILDPGASQSTTNPIFGMPSPGSSTPVGQLPPAATQTLGQLGEMSGPMQQLTQPLQQVTSLFSQVGGTGGGNPADEEAAQMGLLGTSPLSNHPLAGGSGPSAGAGLLRAESLPGAGGSLTRTPLMSQLIEKPVAPSVMPAAAAGSSATGGAAPVGAGAMGQGAQSGGSTRPGLVAPAPLAQEREEDDEDDWDEEDDW</sequence>
<dbReference type="EMBL" id="AE000516">
    <property type="protein sequence ID" value="AAK48355.1"/>
    <property type="status" value="ALT_INIT"/>
    <property type="molecule type" value="Genomic_DNA"/>
</dbReference>
<dbReference type="PIR" id="G70802">
    <property type="entry name" value="G70802"/>
</dbReference>
<dbReference type="RefSeq" id="WP_003399879.1">
    <property type="nucleotide sequence ID" value="NZ_KK341227.1"/>
</dbReference>
<dbReference type="SMR" id="P9WHW8"/>
<dbReference type="KEGG" id="mtc:MT3987"/>
<dbReference type="PATRIC" id="fig|83331.31.peg.4289"/>
<dbReference type="HOGENOM" id="CLU_745612_0_0_11"/>
<dbReference type="Proteomes" id="UP000001020">
    <property type="component" value="Chromosome"/>
</dbReference>
<dbReference type="GO" id="GO:0009986">
    <property type="term" value="C:cell surface"/>
    <property type="evidence" value="ECO:0007669"/>
    <property type="project" value="UniProtKB-SubCell"/>
</dbReference>
<dbReference type="GO" id="GO:0005576">
    <property type="term" value="C:extracellular region"/>
    <property type="evidence" value="ECO:0007669"/>
    <property type="project" value="UniProtKB-KW"/>
</dbReference>
<dbReference type="GO" id="GO:0005886">
    <property type="term" value="C:plasma membrane"/>
    <property type="evidence" value="ECO:0007669"/>
    <property type="project" value="UniProtKB-SubCell"/>
</dbReference>
<dbReference type="GO" id="GO:0052572">
    <property type="term" value="P:response to host immune response"/>
    <property type="evidence" value="ECO:0007669"/>
    <property type="project" value="TreeGrafter"/>
</dbReference>
<dbReference type="Gene3D" id="1.20.1260.20">
    <property type="entry name" value="PPE superfamily"/>
    <property type="match status" value="1"/>
</dbReference>
<dbReference type="InterPro" id="IPR000030">
    <property type="entry name" value="PPE_dom"/>
</dbReference>
<dbReference type="InterPro" id="IPR038332">
    <property type="entry name" value="PPE_sf"/>
</dbReference>
<dbReference type="PANTHER" id="PTHR46766">
    <property type="entry name" value="GLUTAMINE-RICH PROTEIN 2"/>
    <property type="match status" value="1"/>
</dbReference>
<dbReference type="PANTHER" id="PTHR46766:SF1">
    <property type="entry name" value="GLUTAMINE-RICH PROTEIN 2"/>
    <property type="match status" value="1"/>
</dbReference>
<dbReference type="Pfam" id="PF00823">
    <property type="entry name" value="PPE"/>
    <property type="match status" value="1"/>
</dbReference>
<dbReference type="SUPFAM" id="SSF140459">
    <property type="entry name" value="PE/PPE dimer-like"/>
    <property type="match status" value="1"/>
</dbReference>
<gene>
    <name type="primary">PPE68</name>
    <name type="ordered locus">MT3987</name>
</gene>
<keyword id="KW-1003">Cell membrane</keyword>
<keyword id="KW-0134">Cell wall</keyword>
<keyword id="KW-0472">Membrane</keyword>
<keyword id="KW-1185">Reference proteome</keyword>
<keyword id="KW-0964">Secreted</keyword>
<keyword id="KW-0843">Virulence</keyword>
<protein>
    <recommendedName>
        <fullName evidence="1">PPE family immunomodulator PPE68</fullName>
    </recommendedName>
</protein>
<name>PPE68_MYCTO</name>
<organism>
    <name type="scientific">Mycobacterium tuberculosis (strain CDC 1551 / Oshkosh)</name>
    <dbReference type="NCBI Taxonomy" id="83331"/>
    <lineage>
        <taxon>Bacteria</taxon>
        <taxon>Bacillati</taxon>
        <taxon>Actinomycetota</taxon>
        <taxon>Actinomycetes</taxon>
        <taxon>Mycobacteriales</taxon>
        <taxon>Mycobacteriaceae</taxon>
        <taxon>Mycobacterium</taxon>
        <taxon>Mycobacterium tuberculosis complex</taxon>
    </lineage>
</organism>
<reference key="1">
    <citation type="journal article" date="2002" name="J. Bacteriol.">
        <title>Whole-genome comparison of Mycobacterium tuberculosis clinical and laboratory strains.</title>
        <authorList>
            <person name="Fleischmann R.D."/>
            <person name="Alland D."/>
            <person name="Eisen J.A."/>
            <person name="Carpenter L."/>
            <person name="White O."/>
            <person name="Peterson J.D."/>
            <person name="DeBoy R.T."/>
            <person name="Dodson R.J."/>
            <person name="Gwinn M.L."/>
            <person name="Haft D.H."/>
            <person name="Hickey E.K."/>
            <person name="Kolonay J.F."/>
            <person name="Nelson W.C."/>
            <person name="Umayam L.A."/>
            <person name="Ermolaeva M.D."/>
            <person name="Salzberg S.L."/>
            <person name="Delcher A."/>
            <person name="Utterback T.R."/>
            <person name="Weidman J.F."/>
            <person name="Khouri H.M."/>
            <person name="Gill J."/>
            <person name="Mikula A."/>
            <person name="Bishai W."/>
            <person name="Jacobs W.R. Jr."/>
            <person name="Venter J.C."/>
            <person name="Fraser C.M."/>
        </authorList>
    </citation>
    <scope>NUCLEOTIDE SEQUENCE [LARGE SCALE GENOMIC DNA]</scope>
    <source>
        <strain>CDC 1551 / Oshkosh</strain>
    </source>
</reference>
<feature type="chain" id="PRO_0000428109" description="PPE family immunomodulator PPE68">
    <location>
        <begin position="1"/>
        <end position="368"/>
    </location>
</feature>
<feature type="region of interest" description="Disordered" evidence="2">
    <location>
        <begin position="255"/>
        <end position="280"/>
    </location>
</feature>
<feature type="region of interest" description="Disordered" evidence="2">
    <location>
        <begin position="312"/>
        <end position="368"/>
    </location>
</feature>
<feature type="compositionally biased region" description="Low complexity" evidence="2">
    <location>
        <begin position="312"/>
        <end position="327"/>
    </location>
</feature>
<feature type="compositionally biased region" description="Acidic residues" evidence="2">
    <location>
        <begin position="354"/>
        <end position="368"/>
    </location>
</feature>
<comment type="function">
    <text evidence="1">Plays a major role in RD1-associated pathogenesis, and may contribute to the establishment and maintenance of M.tuberculosis infection. Together with PE35, stimulates the secretion of IL-10 and MCP-1 from human macrophages, via the interaction with human Toll-like receptor 2 (TLR2).</text>
</comment>
<comment type="subunit">
    <text evidence="1">Homodimer (By similarity). Interacts with PE35. PE35/PPE68 complex interacts with human TLR2 (By similarity).</text>
</comment>
<comment type="subcellular location">
    <subcellularLocation>
        <location evidence="1">Secreted</location>
        <location evidence="1">Cell wall</location>
    </subcellularLocation>
    <subcellularLocation>
        <location evidence="1">Cell membrane</location>
    </subcellularLocation>
    <subcellularLocation>
        <location evidence="1">Cell surface</location>
    </subcellularLocation>
</comment>
<comment type="similarity">
    <text evidence="3">Belongs to the mycobacterial PPE family.</text>
</comment>
<comment type="sequence caution" evidence="3">
    <conflict type="erroneous initiation">
        <sequence resource="EMBL-CDS" id="AAK48355"/>
    </conflict>
    <text>Extended N-terminus.</text>
</comment>
<accession>P9WHW8</accession>
<accession>L0TFI2</accession>
<accession>Q79F92</accession>
<accession>Q7D4P4</accession>
<proteinExistence type="inferred from homology"/>